<name>Y802_STAEQ</name>
<comment type="function">
    <text evidence="1">Might take part in the signal recognition particle (SRP) pathway. This is inferred from the conservation of its genetic proximity to ftsY/ffh. May be a regulatory protein.</text>
</comment>
<comment type="similarity">
    <text evidence="1">Belongs to the UPF0122 family.</text>
</comment>
<reference key="1">
    <citation type="journal article" date="2005" name="J. Bacteriol.">
        <title>Insights on evolution of virulence and resistance from the complete genome analysis of an early methicillin-resistant Staphylococcus aureus strain and a biofilm-producing methicillin-resistant Staphylococcus epidermidis strain.</title>
        <authorList>
            <person name="Gill S.R."/>
            <person name="Fouts D.E."/>
            <person name="Archer G.L."/>
            <person name="Mongodin E.F."/>
            <person name="DeBoy R.T."/>
            <person name="Ravel J."/>
            <person name="Paulsen I.T."/>
            <person name="Kolonay J.F."/>
            <person name="Brinkac L.M."/>
            <person name="Beanan M.J."/>
            <person name="Dodson R.J."/>
            <person name="Daugherty S.C."/>
            <person name="Madupu R."/>
            <person name="Angiuoli S.V."/>
            <person name="Durkin A.S."/>
            <person name="Haft D.H."/>
            <person name="Vamathevan J.J."/>
            <person name="Khouri H."/>
            <person name="Utterback T.R."/>
            <person name="Lee C."/>
            <person name="Dimitrov G."/>
            <person name="Jiang L."/>
            <person name="Qin H."/>
            <person name="Weidman J."/>
            <person name="Tran K."/>
            <person name="Kang K.H."/>
            <person name="Hance I.R."/>
            <person name="Nelson K.E."/>
            <person name="Fraser C.M."/>
        </authorList>
    </citation>
    <scope>NUCLEOTIDE SEQUENCE [LARGE SCALE GENOMIC DNA]</scope>
    <source>
        <strain>ATCC 35984 / DSM 28319 / BCRC 17069 / CCUG 31568 / BM 3577 / RP62A</strain>
    </source>
</reference>
<accession>Q5HPV5</accession>
<evidence type="ECO:0000255" key="1">
    <source>
        <dbReference type="HAMAP-Rule" id="MF_00245"/>
    </source>
</evidence>
<protein>
    <recommendedName>
        <fullName evidence="1">UPF0122 protein SERP0802</fullName>
    </recommendedName>
</protein>
<proteinExistence type="inferred from homology"/>
<dbReference type="EMBL" id="CP000029">
    <property type="protein sequence ID" value="AAW54133.1"/>
    <property type="molecule type" value="Genomic_DNA"/>
</dbReference>
<dbReference type="RefSeq" id="WP_002457379.1">
    <property type="nucleotide sequence ID" value="NC_002976.3"/>
</dbReference>
<dbReference type="SMR" id="Q5HPV5"/>
<dbReference type="STRING" id="176279.SERP0802"/>
<dbReference type="KEGG" id="ser:SERP0802"/>
<dbReference type="eggNOG" id="COG2739">
    <property type="taxonomic scope" value="Bacteria"/>
</dbReference>
<dbReference type="HOGENOM" id="CLU_129218_1_0_9"/>
<dbReference type="Proteomes" id="UP000000531">
    <property type="component" value="Chromosome"/>
</dbReference>
<dbReference type="Gene3D" id="1.10.10.10">
    <property type="entry name" value="Winged helix-like DNA-binding domain superfamily/Winged helix DNA-binding domain"/>
    <property type="match status" value="1"/>
</dbReference>
<dbReference type="HAMAP" id="MF_00245">
    <property type="entry name" value="UPF0122"/>
    <property type="match status" value="1"/>
</dbReference>
<dbReference type="InterPro" id="IPR013324">
    <property type="entry name" value="RNA_pol_sigma_r3/r4-like"/>
</dbReference>
<dbReference type="InterPro" id="IPR007394">
    <property type="entry name" value="UPF0122"/>
</dbReference>
<dbReference type="InterPro" id="IPR054831">
    <property type="entry name" value="UPF0122_fam_protein"/>
</dbReference>
<dbReference type="InterPro" id="IPR036388">
    <property type="entry name" value="WH-like_DNA-bd_sf"/>
</dbReference>
<dbReference type="NCBIfam" id="NF001067">
    <property type="entry name" value="PRK00118.1-2"/>
    <property type="match status" value="1"/>
</dbReference>
<dbReference type="NCBIfam" id="NF001070">
    <property type="entry name" value="PRK00118.1-6"/>
    <property type="match status" value="1"/>
</dbReference>
<dbReference type="NCBIfam" id="NF045758">
    <property type="entry name" value="YlxM"/>
    <property type="match status" value="1"/>
</dbReference>
<dbReference type="PANTHER" id="PTHR40083">
    <property type="entry name" value="UPF0122 PROTEIN CBO2450/CLC_2298"/>
    <property type="match status" value="1"/>
</dbReference>
<dbReference type="PANTHER" id="PTHR40083:SF1">
    <property type="entry name" value="UPF0122 PROTEIN YLXM"/>
    <property type="match status" value="1"/>
</dbReference>
<dbReference type="Pfam" id="PF04297">
    <property type="entry name" value="UPF0122"/>
    <property type="match status" value="1"/>
</dbReference>
<dbReference type="SUPFAM" id="SSF88659">
    <property type="entry name" value="Sigma3 and sigma4 domains of RNA polymerase sigma factors"/>
    <property type="match status" value="1"/>
</dbReference>
<feature type="chain" id="PRO_0000211882" description="UPF0122 protein SERP0802">
    <location>
        <begin position="1"/>
        <end position="110"/>
    </location>
</feature>
<gene>
    <name type="ordered locus">SERP0802</name>
</gene>
<organism>
    <name type="scientific">Staphylococcus epidermidis (strain ATCC 35984 / DSM 28319 / BCRC 17069 / CCUG 31568 / BM 3577 / RP62A)</name>
    <dbReference type="NCBI Taxonomy" id="176279"/>
    <lineage>
        <taxon>Bacteria</taxon>
        <taxon>Bacillati</taxon>
        <taxon>Bacillota</taxon>
        <taxon>Bacilli</taxon>
        <taxon>Bacillales</taxon>
        <taxon>Staphylococcaceae</taxon>
        <taxon>Staphylococcus</taxon>
    </lineage>
</organism>
<keyword id="KW-1185">Reference proteome</keyword>
<sequence>MGQNDLVKTLRMNYLFDFYQSLLTNKQKNYLELFYLQDYSLSEIADTFEVSRQAVYDNIRRTGDLVEDYESKLRLYQRFEKRRELYNLMKQSLNQPELLKQYITQLEELE</sequence>